<name>RS2_ALBFT</name>
<protein>
    <recommendedName>
        <fullName evidence="1">Small ribosomal subunit protein uS2</fullName>
    </recommendedName>
    <alternativeName>
        <fullName evidence="2">30S ribosomal protein S2</fullName>
    </alternativeName>
</protein>
<comment type="similarity">
    <text evidence="1">Belongs to the universal ribosomal protein uS2 family.</text>
</comment>
<evidence type="ECO:0000255" key="1">
    <source>
        <dbReference type="HAMAP-Rule" id="MF_00291"/>
    </source>
</evidence>
<evidence type="ECO:0000305" key="2"/>
<sequence>MAITMREMLEAGVHFGHQTRFWNPKMAPFIFGHRNKIHIINLEKSLPMFQEAAKFASQVSARRGTVLMVGTKRQARETVALEAQRAGVPYVDQRWLGGMLTNFKTVKTSIKRLKDMKIQQEAGLDSLSKKEQLMFARELAKLERDIGGIQDMTVLPDAIFVIDVGFHKIAIAEAKKLGIPLIAVVDTNHSPEGIDYIIPGNDDSSKAVILYARGIADAIIEGRSNAVDDVVKAVVAESSDEFVEVNETAA</sequence>
<reference key="1">
    <citation type="submission" date="2006-02" db="EMBL/GenBank/DDBJ databases">
        <title>Complete sequence of chromosome of Rhodoferax ferrireducens DSM 15236.</title>
        <authorList>
            <person name="Copeland A."/>
            <person name="Lucas S."/>
            <person name="Lapidus A."/>
            <person name="Barry K."/>
            <person name="Detter J.C."/>
            <person name="Glavina del Rio T."/>
            <person name="Hammon N."/>
            <person name="Israni S."/>
            <person name="Pitluck S."/>
            <person name="Brettin T."/>
            <person name="Bruce D."/>
            <person name="Han C."/>
            <person name="Tapia R."/>
            <person name="Gilna P."/>
            <person name="Kiss H."/>
            <person name="Schmutz J."/>
            <person name="Larimer F."/>
            <person name="Land M."/>
            <person name="Kyrpides N."/>
            <person name="Ivanova N."/>
            <person name="Richardson P."/>
        </authorList>
    </citation>
    <scope>NUCLEOTIDE SEQUENCE [LARGE SCALE GENOMIC DNA]</scope>
    <source>
        <strain>ATCC BAA-621 / DSM 15236 / T118</strain>
    </source>
</reference>
<accession>Q21WY9</accession>
<feature type="chain" id="PRO_1000004045" description="Small ribosomal subunit protein uS2">
    <location>
        <begin position="1"/>
        <end position="250"/>
    </location>
</feature>
<keyword id="KW-1185">Reference proteome</keyword>
<keyword id="KW-0687">Ribonucleoprotein</keyword>
<keyword id="KW-0689">Ribosomal protein</keyword>
<organism>
    <name type="scientific">Albidiferax ferrireducens (strain ATCC BAA-621 / DSM 15236 / T118)</name>
    <name type="common">Rhodoferax ferrireducens</name>
    <dbReference type="NCBI Taxonomy" id="338969"/>
    <lineage>
        <taxon>Bacteria</taxon>
        <taxon>Pseudomonadati</taxon>
        <taxon>Pseudomonadota</taxon>
        <taxon>Betaproteobacteria</taxon>
        <taxon>Burkholderiales</taxon>
        <taxon>Comamonadaceae</taxon>
        <taxon>Rhodoferax</taxon>
    </lineage>
</organism>
<gene>
    <name evidence="1" type="primary">rpsB</name>
    <name type="ordered locus">Rfer_1989</name>
</gene>
<proteinExistence type="inferred from homology"/>
<dbReference type="EMBL" id="CP000267">
    <property type="protein sequence ID" value="ABD69714.1"/>
    <property type="molecule type" value="Genomic_DNA"/>
</dbReference>
<dbReference type="RefSeq" id="WP_011464282.1">
    <property type="nucleotide sequence ID" value="NC_007908.1"/>
</dbReference>
<dbReference type="SMR" id="Q21WY9"/>
<dbReference type="STRING" id="338969.Rfer_1989"/>
<dbReference type="KEGG" id="rfr:Rfer_1989"/>
<dbReference type="eggNOG" id="COG0052">
    <property type="taxonomic scope" value="Bacteria"/>
</dbReference>
<dbReference type="HOGENOM" id="CLU_040318_1_2_4"/>
<dbReference type="OrthoDB" id="9808036at2"/>
<dbReference type="Proteomes" id="UP000008332">
    <property type="component" value="Chromosome"/>
</dbReference>
<dbReference type="GO" id="GO:0022627">
    <property type="term" value="C:cytosolic small ribosomal subunit"/>
    <property type="evidence" value="ECO:0007669"/>
    <property type="project" value="TreeGrafter"/>
</dbReference>
<dbReference type="GO" id="GO:0003735">
    <property type="term" value="F:structural constituent of ribosome"/>
    <property type="evidence" value="ECO:0007669"/>
    <property type="project" value="InterPro"/>
</dbReference>
<dbReference type="GO" id="GO:0006412">
    <property type="term" value="P:translation"/>
    <property type="evidence" value="ECO:0007669"/>
    <property type="project" value="UniProtKB-UniRule"/>
</dbReference>
<dbReference type="CDD" id="cd01425">
    <property type="entry name" value="RPS2"/>
    <property type="match status" value="1"/>
</dbReference>
<dbReference type="FunFam" id="1.10.287.610:FF:000001">
    <property type="entry name" value="30S ribosomal protein S2"/>
    <property type="match status" value="1"/>
</dbReference>
<dbReference type="Gene3D" id="3.40.50.10490">
    <property type="entry name" value="Glucose-6-phosphate isomerase like protein, domain 1"/>
    <property type="match status" value="1"/>
</dbReference>
<dbReference type="Gene3D" id="1.10.287.610">
    <property type="entry name" value="Helix hairpin bin"/>
    <property type="match status" value="1"/>
</dbReference>
<dbReference type="HAMAP" id="MF_00291_B">
    <property type="entry name" value="Ribosomal_uS2_B"/>
    <property type="match status" value="1"/>
</dbReference>
<dbReference type="InterPro" id="IPR001865">
    <property type="entry name" value="Ribosomal_uS2"/>
</dbReference>
<dbReference type="InterPro" id="IPR005706">
    <property type="entry name" value="Ribosomal_uS2_bac/mit/plastid"/>
</dbReference>
<dbReference type="InterPro" id="IPR018130">
    <property type="entry name" value="Ribosomal_uS2_CS"/>
</dbReference>
<dbReference type="InterPro" id="IPR023591">
    <property type="entry name" value="Ribosomal_uS2_flav_dom_sf"/>
</dbReference>
<dbReference type="NCBIfam" id="TIGR01011">
    <property type="entry name" value="rpsB_bact"/>
    <property type="match status" value="1"/>
</dbReference>
<dbReference type="PANTHER" id="PTHR12534">
    <property type="entry name" value="30S RIBOSOMAL PROTEIN S2 PROKARYOTIC AND ORGANELLAR"/>
    <property type="match status" value="1"/>
</dbReference>
<dbReference type="PANTHER" id="PTHR12534:SF0">
    <property type="entry name" value="SMALL RIBOSOMAL SUBUNIT PROTEIN US2M"/>
    <property type="match status" value="1"/>
</dbReference>
<dbReference type="Pfam" id="PF00318">
    <property type="entry name" value="Ribosomal_S2"/>
    <property type="match status" value="1"/>
</dbReference>
<dbReference type="PRINTS" id="PR00395">
    <property type="entry name" value="RIBOSOMALS2"/>
</dbReference>
<dbReference type="SUPFAM" id="SSF52313">
    <property type="entry name" value="Ribosomal protein S2"/>
    <property type="match status" value="1"/>
</dbReference>
<dbReference type="PROSITE" id="PS00962">
    <property type="entry name" value="RIBOSOMAL_S2_1"/>
    <property type="match status" value="1"/>
</dbReference>